<proteinExistence type="inferred from homology"/>
<reference key="1">
    <citation type="submission" date="2008-05" db="EMBL/GenBank/DDBJ databases">
        <title>Complete sequence of Rhodopseudomonas palustris TIE-1.</title>
        <authorList>
            <consortium name="US DOE Joint Genome Institute"/>
            <person name="Lucas S."/>
            <person name="Copeland A."/>
            <person name="Lapidus A."/>
            <person name="Glavina del Rio T."/>
            <person name="Dalin E."/>
            <person name="Tice H."/>
            <person name="Pitluck S."/>
            <person name="Chain P."/>
            <person name="Malfatti S."/>
            <person name="Shin M."/>
            <person name="Vergez L."/>
            <person name="Lang D."/>
            <person name="Schmutz J."/>
            <person name="Larimer F."/>
            <person name="Land M."/>
            <person name="Hauser L."/>
            <person name="Kyrpides N."/>
            <person name="Mikhailova N."/>
            <person name="Emerson D."/>
            <person name="Newman D.K."/>
            <person name="Roden E."/>
            <person name="Richardson P."/>
        </authorList>
    </citation>
    <scope>NUCLEOTIDE SEQUENCE [LARGE SCALE GENOMIC DNA]</scope>
    <source>
        <strain>TIE-1</strain>
    </source>
</reference>
<name>URE1_RHOPT</name>
<keyword id="KW-0963">Cytoplasm</keyword>
<keyword id="KW-0378">Hydrolase</keyword>
<keyword id="KW-0479">Metal-binding</keyword>
<keyword id="KW-0533">Nickel</keyword>
<feature type="chain" id="PRO_1000188893" description="Urease subunit alpha">
    <location>
        <begin position="1"/>
        <end position="570"/>
    </location>
</feature>
<feature type="domain" description="Urease" evidence="1">
    <location>
        <begin position="131"/>
        <end position="570"/>
    </location>
</feature>
<feature type="active site" description="Proton donor" evidence="1">
    <location>
        <position position="322"/>
    </location>
</feature>
<feature type="binding site" evidence="1">
    <location>
        <position position="136"/>
    </location>
    <ligand>
        <name>Ni(2+)</name>
        <dbReference type="ChEBI" id="CHEBI:49786"/>
        <label>1</label>
    </ligand>
</feature>
<feature type="binding site" evidence="1">
    <location>
        <position position="138"/>
    </location>
    <ligand>
        <name>Ni(2+)</name>
        <dbReference type="ChEBI" id="CHEBI:49786"/>
        <label>1</label>
    </ligand>
</feature>
<feature type="binding site" description="via carbamate group" evidence="1">
    <location>
        <position position="219"/>
    </location>
    <ligand>
        <name>Ni(2+)</name>
        <dbReference type="ChEBI" id="CHEBI:49786"/>
        <label>1</label>
    </ligand>
</feature>
<feature type="binding site" description="via carbamate group" evidence="1">
    <location>
        <position position="219"/>
    </location>
    <ligand>
        <name>Ni(2+)</name>
        <dbReference type="ChEBI" id="CHEBI:49786"/>
        <label>2</label>
    </ligand>
</feature>
<feature type="binding site" evidence="1">
    <location>
        <position position="221"/>
    </location>
    <ligand>
        <name>substrate</name>
    </ligand>
</feature>
<feature type="binding site" evidence="1">
    <location>
        <position position="248"/>
    </location>
    <ligand>
        <name>Ni(2+)</name>
        <dbReference type="ChEBI" id="CHEBI:49786"/>
        <label>2</label>
    </ligand>
</feature>
<feature type="binding site" evidence="1">
    <location>
        <position position="274"/>
    </location>
    <ligand>
        <name>Ni(2+)</name>
        <dbReference type="ChEBI" id="CHEBI:49786"/>
        <label>2</label>
    </ligand>
</feature>
<feature type="binding site" evidence="1">
    <location>
        <position position="362"/>
    </location>
    <ligand>
        <name>Ni(2+)</name>
        <dbReference type="ChEBI" id="CHEBI:49786"/>
        <label>1</label>
    </ligand>
</feature>
<feature type="modified residue" description="N6-carboxylysine" evidence="1">
    <location>
        <position position="219"/>
    </location>
</feature>
<sequence length="570" mass="60576">MSTRISRSVYADMFGPTTGDRVRLADTDLIIEVEKDLTTYGEEVKFGGGKVIRDGMGQSQVTNKDGAADTVITNALIVDHWGIVKADVAITAGVITAIGKAGNPDVQPNVDIIIGPGTDVIAGEGKILTAGGFDSHIHFICPQQIEHALMSGVTTMLGGGTGPSHGTFATTCTPGPWHIGRMIQSFDAFPVNLGISGKGNAALPGPLKEMIEGGACALKLHEDWGTTPAAIDNCLSVADDYDIQVMIHTDTLNESGFVEDTVKAFKGRTIHAFHTEGAGGGHAPDIIKVASLENVLPSSTNPTRPFTKNTIDEHLDMLMVCHHLDPSIAEDLAFAESRIRKETIAAEDILHDLGALSMMSSDSQAMGRLGEVIIRTWQTADKMKKQRGALPQDSARNDNFRVKRYIAKYTINPAIAHGVSKLIGSVETGKMADLVLWSPAFFGVKPDCIIKGGSIVAAPMGDPNASIPTPQPVHYQPMFGAYGKALTVSSVVFTSQAAAAGNLARDLGIAKTLVPVSNVRGGISKKSMIHNDATPKLEVDPETYEVRADGELLTCAPAEVLPLAQRYFMF</sequence>
<organism>
    <name type="scientific">Rhodopseudomonas palustris (strain TIE-1)</name>
    <dbReference type="NCBI Taxonomy" id="395960"/>
    <lineage>
        <taxon>Bacteria</taxon>
        <taxon>Pseudomonadati</taxon>
        <taxon>Pseudomonadota</taxon>
        <taxon>Alphaproteobacteria</taxon>
        <taxon>Hyphomicrobiales</taxon>
        <taxon>Nitrobacteraceae</taxon>
        <taxon>Rhodopseudomonas</taxon>
    </lineage>
</organism>
<accession>B3QGK1</accession>
<evidence type="ECO:0000255" key="1">
    <source>
        <dbReference type="HAMAP-Rule" id="MF_01953"/>
    </source>
</evidence>
<protein>
    <recommendedName>
        <fullName evidence="1">Urease subunit alpha</fullName>
        <ecNumber evidence="1">3.5.1.5</ecNumber>
    </recommendedName>
    <alternativeName>
        <fullName evidence="1">Urea amidohydrolase subunit alpha</fullName>
    </alternativeName>
</protein>
<comment type="catalytic activity">
    <reaction evidence="1">
        <text>urea + 2 H2O + H(+) = hydrogencarbonate + 2 NH4(+)</text>
        <dbReference type="Rhea" id="RHEA:20557"/>
        <dbReference type="ChEBI" id="CHEBI:15377"/>
        <dbReference type="ChEBI" id="CHEBI:15378"/>
        <dbReference type="ChEBI" id="CHEBI:16199"/>
        <dbReference type="ChEBI" id="CHEBI:17544"/>
        <dbReference type="ChEBI" id="CHEBI:28938"/>
        <dbReference type="EC" id="3.5.1.5"/>
    </reaction>
</comment>
<comment type="cofactor">
    <cofactor evidence="1">
        <name>Ni cation</name>
        <dbReference type="ChEBI" id="CHEBI:25516"/>
    </cofactor>
    <text evidence="1">Binds 2 nickel ions per subunit.</text>
</comment>
<comment type="pathway">
    <text evidence="1">Nitrogen metabolism; urea degradation; CO(2) and NH(3) from urea (urease route): step 1/1.</text>
</comment>
<comment type="subunit">
    <text evidence="1">Heterotrimer of UreA (gamma), UreB (beta) and UreC (alpha) subunits. Three heterotrimers associate to form the active enzyme.</text>
</comment>
<comment type="subcellular location">
    <subcellularLocation>
        <location evidence="1">Cytoplasm</location>
    </subcellularLocation>
</comment>
<comment type="PTM">
    <text evidence="1">Carboxylation allows a single lysine to coordinate two nickel ions.</text>
</comment>
<comment type="similarity">
    <text evidence="1">Belongs to the metallo-dependent hydrolases superfamily. Urease alpha subunit family.</text>
</comment>
<dbReference type="EC" id="3.5.1.5" evidence="1"/>
<dbReference type="EMBL" id="CP001096">
    <property type="protein sequence ID" value="ACF02678.1"/>
    <property type="molecule type" value="Genomic_DNA"/>
</dbReference>
<dbReference type="RefSeq" id="WP_012497080.1">
    <property type="nucleotide sequence ID" value="NC_011004.1"/>
</dbReference>
<dbReference type="SMR" id="B3QGK1"/>
<dbReference type="KEGG" id="rpt:Rpal_4182"/>
<dbReference type="HOGENOM" id="CLU_000980_0_0_5"/>
<dbReference type="OrthoDB" id="9802793at2"/>
<dbReference type="UniPathway" id="UPA00258">
    <property type="reaction ID" value="UER00370"/>
</dbReference>
<dbReference type="Proteomes" id="UP000001725">
    <property type="component" value="Chromosome"/>
</dbReference>
<dbReference type="GO" id="GO:0005737">
    <property type="term" value="C:cytoplasm"/>
    <property type="evidence" value="ECO:0007669"/>
    <property type="project" value="UniProtKB-SubCell"/>
</dbReference>
<dbReference type="GO" id="GO:0016151">
    <property type="term" value="F:nickel cation binding"/>
    <property type="evidence" value="ECO:0007669"/>
    <property type="project" value="UniProtKB-UniRule"/>
</dbReference>
<dbReference type="GO" id="GO:0009039">
    <property type="term" value="F:urease activity"/>
    <property type="evidence" value="ECO:0007669"/>
    <property type="project" value="UniProtKB-UniRule"/>
</dbReference>
<dbReference type="GO" id="GO:0043419">
    <property type="term" value="P:urea catabolic process"/>
    <property type="evidence" value="ECO:0007669"/>
    <property type="project" value="UniProtKB-UniRule"/>
</dbReference>
<dbReference type="CDD" id="cd00375">
    <property type="entry name" value="Urease_alpha"/>
    <property type="match status" value="1"/>
</dbReference>
<dbReference type="Gene3D" id="3.20.20.140">
    <property type="entry name" value="Metal-dependent hydrolases"/>
    <property type="match status" value="1"/>
</dbReference>
<dbReference type="Gene3D" id="2.30.40.10">
    <property type="entry name" value="Urease, subunit C, domain 1"/>
    <property type="match status" value="1"/>
</dbReference>
<dbReference type="HAMAP" id="MF_01953">
    <property type="entry name" value="Urease_alpha"/>
    <property type="match status" value="1"/>
</dbReference>
<dbReference type="InterPro" id="IPR006680">
    <property type="entry name" value="Amidohydro-rel"/>
</dbReference>
<dbReference type="InterPro" id="IPR011059">
    <property type="entry name" value="Metal-dep_hydrolase_composite"/>
</dbReference>
<dbReference type="InterPro" id="IPR032466">
    <property type="entry name" value="Metal_Hydrolase"/>
</dbReference>
<dbReference type="InterPro" id="IPR011612">
    <property type="entry name" value="Urease_alpha_N_dom"/>
</dbReference>
<dbReference type="InterPro" id="IPR050112">
    <property type="entry name" value="Urease_alpha_subunit"/>
</dbReference>
<dbReference type="InterPro" id="IPR017950">
    <property type="entry name" value="Urease_AS"/>
</dbReference>
<dbReference type="InterPro" id="IPR005848">
    <property type="entry name" value="Urease_asu"/>
</dbReference>
<dbReference type="InterPro" id="IPR017951">
    <property type="entry name" value="Urease_asu_c"/>
</dbReference>
<dbReference type="InterPro" id="IPR029754">
    <property type="entry name" value="Urease_Ni-bd"/>
</dbReference>
<dbReference type="NCBIfam" id="NF009685">
    <property type="entry name" value="PRK13206.1"/>
    <property type="match status" value="1"/>
</dbReference>
<dbReference type="NCBIfam" id="NF009686">
    <property type="entry name" value="PRK13207.1"/>
    <property type="match status" value="1"/>
</dbReference>
<dbReference type="NCBIfam" id="TIGR01792">
    <property type="entry name" value="urease_alph"/>
    <property type="match status" value="1"/>
</dbReference>
<dbReference type="PANTHER" id="PTHR43440">
    <property type="entry name" value="UREASE"/>
    <property type="match status" value="1"/>
</dbReference>
<dbReference type="PANTHER" id="PTHR43440:SF1">
    <property type="entry name" value="UREASE"/>
    <property type="match status" value="1"/>
</dbReference>
<dbReference type="Pfam" id="PF01979">
    <property type="entry name" value="Amidohydro_1"/>
    <property type="match status" value="1"/>
</dbReference>
<dbReference type="Pfam" id="PF00449">
    <property type="entry name" value="Urease_alpha"/>
    <property type="match status" value="1"/>
</dbReference>
<dbReference type="PRINTS" id="PR01752">
    <property type="entry name" value="UREASE"/>
</dbReference>
<dbReference type="SUPFAM" id="SSF51338">
    <property type="entry name" value="Composite domain of metallo-dependent hydrolases"/>
    <property type="match status" value="2"/>
</dbReference>
<dbReference type="SUPFAM" id="SSF51556">
    <property type="entry name" value="Metallo-dependent hydrolases"/>
    <property type="match status" value="1"/>
</dbReference>
<dbReference type="PROSITE" id="PS01120">
    <property type="entry name" value="UREASE_1"/>
    <property type="match status" value="1"/>
</dbReference>
<dbReference type="PROSITE" id="PS00145">
    <property type="entry name" value="UREASE_2"/>
    <property type="match status" value="1"/>
</dbReference>
<dbReference type="PROSITE" id="PS51368">
    <property type="entry name" value="UREASE_3"/>
    <property type="match status" value="1"/>
</dbReference>
<gene>
    <name evidence="1" type="primary">ureC</name>
    <name type="ordered locus">Rpal_4182</name>
</gene>